<reference key="1">
    <citation type="submission" date="2008-05" db="EMBL/GenBank/DDBJ databases">
        <title>Genome sequence of Helicobacter pylori from the remote Amazon: traces of Asian ancestry of the first Americans.</title>
        <authorList>
            <person name="Kersulyte D."/>
            <person name="Kalia A."/>
            <person name="Gilman R.H."/>
            <person name="Berg D.E."/>
        </authorList>
    </citation>
    <scope>NUCLEOTIDE SEQUENCE [LARGE SCALE GENOMIC DNA]</scope>
    <source>
        <strain>Shi470</strain>
    </source>
</reference>
<protein>
    <recommendedName>
        <fullName evidence="1">Bifunctional protein HldE</fullName>
    </recommendedName>
    <domain>
        <recommendedName>
            <fullName evidence="1">D-beta-D-heptose 7-phosphate kinase</fullName>
            <ecNumber evidence="1">2.7.1.167</ecNumber>
        </recommendedName>
        <alternativeName>
            <fullName evidence="1">D-beta-D-heptose 7-phosphotransferase</fullName>
        </alternativeName>
        <alternativeName>
            <fullName evidence="1">D-glycero-beta-D-manno-heptose-7-phosphate kinase</fullName>
        </alternativeName>
    </domain>
    <domain>
        <recommendedName>
            <fullName evidence="1">D-beta-D-heptose 1-phosphate adenylyltransferase</fullName>
            <ecNumber evidence="1">2.7.7.70</ecNumber>
        </recommendedName>
        <alternativeName>
            <fullName evidence="1">D-glycero-beta-D-manno-heptose 1-phosphate adenylyltransferase</fullName>
        </alternativeName>
    </domain>
</protein>
<feature type="chain" id="PRO_1000148129" description="Bifunctional protein HldE">
    <location>
        <begin position="1"/>
        <end position="463"/>
    </location>
</feature>
<feature type="region of interest" description="Ribokinase">
    <location>
        <begin position="1"/>
        <end position="311"/>
    </location>
</feature>
<feature type="region of interest" description="Cytidylyltransferase">
    <location>
        <begin position="334"/>
        <end position="463"/>
    </location>
</feature>
<feature type="active site" evidence="1">
    <location>
        <position position="260"/>
    </location>
</feature>
<feature type="binding site" evidence="1">
    <location>
        <begin position="191"/>
        <end position="194"/>
    </location>
    <ligand>
        <name>ATP</name>
        <dbReference type="ChEBI" id="CHEBI:30616"/>
    </ligand>
</feature>
<evidence type="ECO:0000255" key="1">
    <source>
        <dbReference type="HAMAP-Rule" id="MF_01603"/>
    </source>
</evidence>
<organism>
    <name type="scientific">Helicobacter pylori (strain Shi470)</name>
    <dbReference type="NCBI Taxonomy" id="512562"/>
    <lineage>
        <taxon>Bacteria</taxon>
        <taxon>Pseudomonadati</taxon>
        <taxon>Campylobacterota</taxon>
        <taxon>Epsilonproteobacteria</taxon>
        <taxon>Campylobacterales</taxon>
        <taxon>Helicobacteraceae</taxon>
        <taxon>Helicobacter</taxon>
    </lineage>
</organism>
<keyword id="KW-0067">ATP-binding</keyword>
<keyword id="KW-0119">Carbohydrate metabolism</keyword>
<keyword id="KW-0418">Kinase</keyword>
<keyword id="KW-0511">Multifunctional enzyme</keyword>
<keyword id="KW-0547">Nucleotide-binding</keyword>
<keyword id="KW-0548">Nucleotidyltransferase</keyword>
<keyword id="KW-0808">Transferase</keyword>
<name>HLDE_HELPS</name>
<proteinExistence type="inferred from homology"/>
<accession>B2USX2</accession>
<comment type="function">
    <text evidence="1">Catalyzes the phosphorylation of D-glycero-D-manno-heptose 7-phosphate at the C-1 position to selectively form D-glycero-beta-D-manno-heptose-1,7-bisphosphate.</text>
</comment>
<comment type="function">
    <text evidence="1">Catalyzes the ADP transfer from ATP to D-glycero-beta-D-manno-heptose 1-phosphate, yielding ADP-D-glycero-beta-D-manno-heptose.</text>
</comment>
<comment type="catalytic activity">
    <reaction evidence="1">
        <text>D-glycero-beta-D-manno-heptose 7-phosphate + ATP = D-glycero-beta-D-manno-heptose 1,7-bisphosphate + ADP + H(+)</text>
        <dbReference type="Rhea" id="RHEA:27473"/>
        <dbReference type="ChEBI" id="CHEBI:15378"/>
        <dbReference type="ChEBI" id="CHEBI:30616"/>
        <dbReference type="ChEBI" id="CHEBI:60204"/>
        <dbReference type="ChEBI" id="CHEBI:60208"/>
        <dbReference type="ChEBI" id="CHEBI:456216"/>
        <dbReference type="EC" id="2.7.1.167"/>
    </reaction>
</comment>
<comment type="catalytic activity">
    <reaction evidence="1">
        <text>D-glycero-beta-D-manno-heptose 1-phosphate + ATP + H(+) = ADP-D-glycero-beta-D-manno-heptose + diphosphate</text>
        <dbReference type="Rhea" id="RHEA:27465"/>
        <dbReference type="ChEBI" id="CHEBI:15378"/>
        <dbReference type="ChEBI" id="CHEBI:30616"/>
        <dbReference type="ChEBI" id="CHEBI:33019"/>
        <dbReference type="ChEBI" id="CHEBI:59967"/>
        <dbReference type="ChEBI" id="CHEBI:61593"/>
        <dbReference type="EC" id="2.7.7.70"/>
    </reaction>
</comment>
<comment type="pathway">
    <text evidence="1">Nucleotide-sugar biosynthesis; ADP-L-glycero-beta-D-manno-heptose biosynthesis; ADP-L-glycero-beta-D-manno-heptose from D-glycero-beta-D-manno-heptose 7-phosphate: step 1/4.</text>
</comment>
<comment type="pathway">
    <text evidence="1">Nucleotide-sugar biosynthesis; ADP-L-glycero-beta-D-manno-heptose biosynthesis; ADP-L-glycero-beta-D-manno-heptose from D-glycero-beta-D-manno-heptose 7-phosphate: step 3/4.</text>
</comment>
<comment type="subunit">
    <text evidence="1">Homodimer.</text>
</comment>
<comment type="similarity">
    <text evidence="1">In the N-terminal section; belongs to the carbohydrate kinase PfkB family.</text>
</comment>
<comment type="similarity">
    <text evidence="1">In the C-terminal section; belongs to the cytidylyltransferase family.</text>
</comment>
<gene>
    <name evidence="1" type="primary">hldE</name>
    <name type="ordered locus">HPSH_02520</name>
</gene>
<dbReference type="EC" id="2.7.1.167" evidence="1"/>
<dbReference type="EC" id="2.7.7.70" evidence="1"/>
<dbReference type="EMBL" id="CP001072">
    <property type="protein sequence ID" value="ACD47954.1"/>
    <property type="molecule type" value="Genomic_DNA"/>
</dbReference>
<dbReference type="RefSeq" id="WP_000809658.1">
    <property type="nucleotide sequence ID" value="NC_010698.2"/>
</dbReference>
<dbReference type="SMR" id="B2USX2"/>
<dbReference type="KEGG" id="hps:HPSH_02520"/>
<dbReference type="HOGENOM" id="CLU_021150_2_1_7"/>
<dbReference type="UniPathway" id="UPA00356">
    <property type="reaction ID" value="UER00437"/>
</dbReference>
<dbReference type="UniPathway" id="UPA00356">
    <property type="reaction ID" value="UER00439"/>
</dbReference>
<dbReference type="GO" id="GO:0005829">
    <property type="term" value="C:cytosol"/>
    <property type="evidence" value="ECO:0007669"/>
    <property type="project" value="TreeGrafter"/>
</dbReference>
<dbReference type="GO" id="GO:0005524">
    <property type="term" value="F:ATP binding"/>
    <property type="evidence" value="ECO:0007669"/>
    <property type="project" value="UniProtKB-UniRule"/>
</dbReference>
<dbReference type="GO" id="GO:0033785">
    <property type="term" value="F:heptose 7-phosphate kinase activity"/>
    <property type="evidence" value="ECO:0007669"/>
    <property type="project" value="UniProtKB-UniRule"/>
</dbReference>
<dbReference type="GO" id="GO:0033786">
    <property type="term" value="F:heptose-1-phosphate adenylyltransferase activity"/>
    <property type="evidence" value="ECO:0007669"/>
    <property type="project" value="UniProtKB-UniRule"/>
</dbReference>
<dbReference type="GO" id="GO:0016773">
    <property type="term" value="F:phosphotransferase activity, alcohol group as acceptor"/>
    <property type="evidence" value="ECO:0007669"/>
    <property type="project" value="InterPro"/>
</dbReference>
<dbReference type="GO" id="GO:0097171">
    <property type="term" value="P:ADP-L-glycero-beta-D-manno-heptose biosynthetic process"/>
    <property type="evidence" value="ECO:0007669"/>
    <property type="project" value="UniProtKB-UniPathway"/>
</dbReference>
<dbReference type="CDD" id="cd01172">
    <property type="entry name" value="RfaE_like"/>
    <property type="match status" value="1"/>
</dbReference>
<dbReference type="Gene3D" id="3.40.1190.20">
    <property type="match status" value="1"/>
</dbReference>
<dbReference type="Gene3D" id="3.40.50.620">
    <property type="entry name" value="HUPs"/>
    <property type="match status" value="1"/>
</dbReference>
<dbReference type="HAMAP" id="MF_01603">
    <property type="entry name" value="HldE"/>
    <property type="match status" value="1"/>
</dbReference>
<dbReference type="InterPro" id="IPR023030">
    <property type="entry name" value="Bifunc_HldE"/>
</dbReference>
<dbReference type="InterPro" id="IPR004821">
    <property type="entry name" value="Cyt_trans-like"/>
</dbReference>
<dbReference type="InterPro" id="IPR011611">
    <property type="entry name" value="PfkB_dom"/>
</dbReference>
<dbReference type="InterPro" id="IPR011913">
    <property type="entry name" value="RfaE_dom_I"/>
</dbReference>
<dbReference type="InterPro" id="IPR011914">
    <property type="entry name" value="RfaE_dom_II"/>
</dbReference>
<dbReference type="InterPro" id="IPR029056">
    <property type="entry name" value="Ribokinase-like"/>
</dbReference>
<dbReference type="InterPro" id="IPR014729">
    <property type="entry name" value="Rossmann-like_a/b/a_fold"/>
</dbReference>
<dbReference type="NCBIfam" id="TIGR00125">
    <property type="entry name" value="cyt_tran_rel"/>
    <property type="match status" value="1"/>
</dbReference>
<dbReference type="NCBIfam" id="TIGR02198">
    <property type="entry name" value="rfaE_dom_I"/>
    <property type="match status" value="1"/>
</dbReference>
<dbReference type="NCBIfam" id="TIGR02199">
    <property type="entry name" value="rfaE_dom_II"/>
    <property type="match status" value="1"/>
</dbReference>
<dbReference type="PANTHER" id="PTHR46969">
    <property type="entry name" value="BIFUNCTIONAL PROTEIN HLDE"/>
    <property type="match status" value="1"/>
</dbReference>
<dbReference type="PANTHER" id="PTHR46969:SF1">
    <property type="entry name" value="BIFUNCTIONAL PROTEIN HLDE"/>
    <property type="match status" value="1"/>
</dbReference>
<dbReference type="Pfam" id="PF01467">
    <property type="entry name" value="CTP_transf_like"/>
    <property type="match status" value="1"/>
</dbReference>
<dbReference type="Pfam" id="PF00294">
    <property type="entry name" value="PfkB"/>
    <property type="match status" value="1"/>
</dbReference>
<dbReference type="SUPFAM" id="SSF52374">
    <property type="entry name" value="Nucleotidylyl transferase"/>
    <property type="match status" value="1"/>
</dbReference>
<dbReference type="SUPFAM" id="SSF53613">
    <property type="entry name" value="Ribokinase-like"/>
    <property type="match status" value="1"/>
</dbReference>
<sequence length="463" mass="51278">MKQILVVGDLIADYYLWGRSERLSPEAPVPVLEVQRESKNLGGAANVANNLISLKAKVFLCGVVGDDLEGEHFINALKARNIDTSCILTDKTRCTTLKTRIIAQNQQIVRVDKEIKDPLNADLRKKLLDFFTEKIQEIDGVILSDYNKGVLDFELTQKMIALANKHHKLILCDPKGKDYSKYAHASLITPNRIELEHALHLKLDSHANLSKALQILKETYHIAMPLVTLSEQGIAFLEKGELVNCPTIAKEVYDVTGAGDTVIASLTLSLLESMSLKEACEFANAAAAVVVGKMGSALASLEEIALILNQTHPKILPLEKLLETLEHHQQKIVFTNGCFDILHKGHASYLQKAKALGDILIVGLNSDASVKRLKGDKRPIVSEKDRAFLLASLSCVDYVVVFEEDTPIKLIQALKPDILVKGADYLNKEIIGSEFAKETRLMEFEEGYSTSAIIERIKRTCND</sequence>